<sequence>MTFNHKKMEPKWQQYWSEHNTFKTTEDKDKENFYALDMFPYPSGAGLHVGHPEGYTATDILSRMKRMQGKNVLHPIGWDAFGLPAEQYAIDTGNDPEEFTALNIANFTRQIKSLGFSYDWDREINTTDPEYYKWTQWIFEKLYENGLAYEAEIAVNWCPALGTVLANEEVIDGKSERGGFPVFRKPMRQWMLKITAYADRLLDDLELVDWPENIKDMQRNWIGRSEGAEVTFKIKDSDETFNVFTTRPDTLFGATYTVFAPEHELIEKITTPEQKEAVEAYKKQVELKSELERTDLAKDKTGVFTGAYAINPINGEEVPIWIADYVLIQYGTGAIMAVPAHDERDFEFAQQFGLNIRPVLEGGDVTKEAFTGDGPHINSDFLNGLAKAEAITAAIDWLEKEGIGSRKITYRLRDWLFSRQRYWGEPIPVIHWEDGETTLVPEDELPLLLPKATEIKPSGTGESPLANLHDWVNVTDENGRKGRRETNTMPQWAGSSWYFLRYIDPKNSEAIADKEKLAEWLPVDVYIGGAEHAVLHLLYARFWHKFLYDIGVVPTKEPFQKLFNQGMILGENNEKMSKSRGNVVNPDEVVEKYGADTLRLYEMFMGPLEASIAWNENGLEGARKFLDRIWRLLVTEEGTLAEKVTTDANANLEKAYHHMVKTVTNHYENLRFNTGISQLMIFINEAYKRDTIPKQYVEGFVQLLSPIAPHLAEELWEILGHTETISYVAWPTYDETKLVEDEVEIVLQVNGKVKSKITVAKSLGKEELEKLAHEDDKIKENIDGKTIRKVIVVPGKLVNIVAN</sequence>
<gene>
    <name evidence="1" type="primary">leuS</name>
    <name type="ordered locus">lin1769</name>
</gene>
<organism>
    <name type="scientific">Listeria innocua serovar 6a (strain ATCC BAA-680 / CLIP 11262)</name>
    <dbReference type="NCBI Taxonomy" id="272626"/>
    <lineage>
        <taxon>Bacteria</taxon>
        <taxon>Bacillati</taxon>
        <taxon>Bacillota</taxon>
        <taxon>Bacilli</taxon>
        <taxon>Bacillales</taxon>
        <taxon>Listeriaceae</taxon>
        <taxon>Listeria</taxon>
    </lineage>
</organism>
<feature type="chain" id="PRO_0000152037" description="Leucine--tRNA ligase">
    <location>
        <begin position="1"/>
        <end position="803"/>
    </location>
</feature>
<feature type="short sequence motif" description="'HIGH' region">
    <location>
        <begin position="40"/>
        <end position="51"/>
    </location>
</feature>
<feature type="short sequence motif" description="'KMSKS' region">
    <location>
        <begin position="575"/>
        <end position="579"/>
    </location>
</feature>
<feature type="binding site" evidence="1">
    <location>
        <position position="578"/>
    </location>
    <ligand>
        <name>ATP</name>
        <dbReference type="ChEBI" id="CHEBI:30616"/>
    </ligand>
</feature>
<evidence type="ECO:0000255" key="1">
    <source>
        <dbReference type="HAMAP-Rule" id="MF_00049"/>
    </source>
</evidence>
<proteinExistence type="inferred from homology"/>
<accession>Q92AZ9</accession>
<name>SYL_LISIN</name>
<keyword id="KW-0030">Aminoacyl-tRNA synthetase</keyword>
<keyword id="KW-0067">ATP-binding</keyword>
<keyword id="KW-0963">Cytoplasm</keyword>
<keyword id="KW-0436">Ligase</keyword>
<keyword id="KW-0547">Nucleotide-binding</keyword>
<keyword id="KW-0648">Protein biosynthesis</keyword>
<comment type="catalytic activity">
    <reaction evidence="1">
        <text>tRNA(Leu) + L-leucine + ATP = L-leucyl-tRNA(Leu) + AMP + diphosphate</text>
        <dbReference type="Rhea" id="RHEA:11688"/>
        <dbReference type="Rhea" id="RHEA-COMP:9613"/>
        <dbReference type="Rhea" id="RHEA-COMP:9622"/>
        <dbReference type="ChEBI" id="CHEBI:30616"/>
        <dbReference type="ChEBI" id="CHEBI:33019"/>
        <dbReference type="ChEBI" id="CHEBI:57427"/>
        <dbReference type="ChEBI" id="CHEBI:78442"/>
        <dbReference type="ChEBI" id="CHEBI:78494"/>
        <dbReference type="ChEBI" id="CHEBI:456215"/>
        <dbReference type="EC" id="6.1.1.4"/>
    </reaction>
</comment>
<comment type="subcellular location">
    <subcellularLocation>
        <location evidence="1">Cytoplasm</location>
    </subcellularLocation>
</comment>
<comment type="similarity">
    <text evidence="1">Belongs to the class-I aminoacyl-tRNA synthetase family.</text>
</comment>
<reference key="1">
    <citation type="journal article" date="2001" name="Science">
        <title>Comparative genomics of Listeria species.</title>
        <authorList>
            <person name="Glaser P."/>
            <person name="Frangeul L."/>
            <person name="Buchrieser C."/>
            <person name="Rusniok C."/>
            <person name="Amend A."/>
            <person name="Baquero F."/>
            <person name="Berche P."/>
            <person name="Bloecker H."/>
            <person name="Brandt P."/>
            <person name="Chakraborty T."/>
            <person name="Charbit A."/>
            <person name="Chetouani F."/>
            <person name="Couve E."/>
            <person name="de Daruvar A."/>
            <person name="Dehoux P."/>
            <person name="Domann E."/>
            <person name="Dominguez-Bernal G."/>
            <person name="Duchaud E."/>
            <person name="Durant L."/>
            <person name="Dussurget O."/>
            <person name="Entian K.-D."/>
            <person name="Fsihi H."/>
            <person name="Garcia-del Portillo F."/>
            <person name="Garrido P."/>
            <person name="Gautier L."/>
            <person name="Goebel W."/>
            <person name="Gomez-Lopez N."/>
            <person name="Hain T."/>
            <person name="Hauf J."/>
            <person name="Jackson D."/>
            <person name="Jones L.-M."/>
            <person name="Kaerst U."/>
            <person name="Kreft J."/>
            <person name="Kuhn M."/>
            <person name="Kunst F."/>
            <person name="Kurapkat G."/>
            <person name="Madueno E."/>
            <person name="Maitournam A."/>
            <person name="Mata Vicente J."/>
            <person name="Ng E."/>
            <person name="Nedjari H."/>
            <person name="Nordsiek G."/>
            <person name="Novella S."/>
            <person name="de Pablos B."/>
            <person name="Perez-Diaz J.-C."/>
            <person name="Purcell R."/>
            <person name="Remmel B."/>
            <person name="Rose M."/>
            <person name="Schlueter T."/>
            <person name="Simoes N."/>
            <person name="Tierrez A."/>
            <person name="Vazquez-Boland J.-A."/>
            <person name="Voss H."/>
            <person name="Wehland J."/>
            <person name="Cossart P."/>
        </authorList>
    </citation>
    <scope>NUCLEOTIDE SEQUENCE [LARGE SCALE GENOMIC DNA]</scope>
    <source>
        <strain>ATCC BAA-680 / CLIP 11262</strain>
    </source>
</reference>
<dbReference type="EC" id="6.1.1.4" evidence="1"/>
<dbReference type="EMBL" id="AL596169">
    <property type="protein sequence ID" value="CAC97000.1"/>
    <property type="molecule type" value="Genomic_DNA"/>
</dbReference>
<dbReference type="PIR" id="AH1653">
    <property type="entry name" value="AH1653"/>
</dbReference>
<dbReference type="RefSeq" id="WP_010990945.1">
    <property type="nucleotide sequence ID" value="NC_003212.1"/>
</dbReference>
<dbReference type="SMR" id="Q92AZ9"/>
<dbReference type="STRING" id="272626.gene:17566100"/>
<dbReference type="KEGG" id="lin:leuS"/>
<dbReference type="eggNOG" id="COG0495">
    <property type="taxonomic scope" value="Bacteria"/>
</dbReference>
<dbReference type="HOGENOM" id="CLU_004427_0_0_9"/>
<dbReference type="OrthoDB" id="9810365at2"/>
<dbReference type="Proteomes" id="UP000002513">
    <property type="component" value="Chromosome"/>
</dbReference>
<dbReference type="GO" id="GO:0005829">
    <property type="term" value="C:cytosol"/>
    <property type="evidence" value="ECO:0007669"/>
    <property type="project" value="TreeGrafter"/>
</dbReference>
<dbReference type="GO" id="GO:0002161">
    <property type="term" value="F:aminoacyl-tRNA deacylase activity"/>
    <property type="evidence" value="ECO:0007669"/>
    <property type="project" value="InterPro"/>
</dbReference>
<dbReference type="GO" id="GO:0005524">
    <property type="term" value="F:ATP binding"/>
    <property type="evidence" value="ECO:0007669"/>
    <property type="project" value="UniProtKB-UniRule"/>
</dbReference>
<dbReference type="GO" id="GO:0004823">
    <property type="term" value="F:leucine-tRNA ligase activity"/>
    <property type="evidence" value="ECO:0007669"/>
    <property type="project" value="UniProtKB-UniRule"/>
</dbReference>
<dbReference type="GO" id="GO:0006429">
    <property type="term" value="P:leucyl-tRNA aminoacylation"/>
    <property type="evidence" value="ECO:0007669"/>
    <property type="project" value="UniProtKB-UniRule"/>
</dbReference>
<dbReference type="CDD" id="cd07958">
    <property type="entry name" value="Anticodon_Ia_Leu_BEm"/>
    <property type="match status" value="1"/>
</dbReference>
<dbReference type="CDD" id="cd00812">
    <property type="entry name" value="LeuRS_core"/>
    <property type="match status" value="1"/>
</dbReference>
<dbReference type="FunFam" id="1.10.730.10:FF:000018">
    <property type="entry name" value="Leucine--tRNA ligase"/>
    <property type="match status" value="1"/>
</dbReference>
<dbReference type="FunFam" id="3.10.20.590:FF:000001">
    <property type="entry name" value="Leucine--tRNA ligase"/>
    <property type="match status" value="1"/>
</dbReference>
<dbReference type="FunFam" id="3.40.50.620:FF:000056">
    <property type="entry name" value="Leucine--tRNA ligase"/>
    <property type="match status" value="1"/>
</dbReference>
<dbReference type="FunFam" id="3.40.50.620:FF:000077">
    <property type="entry name" value="Leucine--tRNA ligase"/>
    <property type="match status" value="1"/>
</dbReference>
<dbReference type="Gene3D" id="3.10.20.590">
    <property type="match status" value="1"/>
</dbReference>
<dbReference type="Gene3D" id="3.40.50.620">
    <property type="entry name" value="HUPs"/>
    <property type="match status" value="2"/>
</dbReference>
<dbReference type="Gene3D" id="1.10.730.10">
    <property type="entry name" value="Isoleucyl-tRNA Synthetase, Domain 1"/>
    <property type="match status" value="1"/>
</dbReference>
<dbReference type="HAMAP" id="MF_00049_B">
    <property type="entry name" value="Leu_tRNA_synth_B"/>
    <property type="match status" value="1"/>
</dbReference>
<dbReference type="InterPro" id="IPR001412">
    <property type="entry name" value="aa-tRNA-synth_I_CS"/>
</dbReference>
<dbReference type="InterPro" id="IPR002300">
    <property type="entry name" value="aa-tRNA-synth_Ia"/>
</dbReference>
<dbReference type="InterPro" id="IPR002302">
    <property type="entry name" value="Leu-tRNA-ligase"/>
</dbReference>
<dbReference type="InterPro" id="IPR025709">
    <property type="entry name" value="Leu_tRNA-synth_edit"/>
</dbReference>
<dbReference type="InterPro" id="IPR013155">
    <property type="entry name" value="M/V/L/I-tRNA-synth_anticd-bd"/>
</dbReference>
<dbReference type="InterPro" id="IPR015413">
    <property type="entry name" value="Methionyl/Leucyl_tRNA_Synth"/>
</dbReference>
<dbReference type="InterPro" id="IPR014729">
    <property type="entry name" value="Rossmann-like_a/b/a_fold"/>
</dbReference>
<dbReference type="InterPro" id="IPR009080">
    <property type="entry name" value="tRNAsynth_Ia_anticodon-bd"/>
</dbReference>
<dbReference type="InterPro" id="IPR009008">
    <property type="entry name" value="Val/Leu/Ile-tRNA-synth_edit"/>
</dbReference>
<dbReference type="NCBIfam" id="TIGR00396">
    <property type="entry name" value="leuS_bact"/>
    <property type="match status" value="1"/>
</dbReference>
<dbReference type="PANTHER" id="PTHR43740:SF2">
    <property type="entry name" value="LEUCINE--TRNA LIGASE, MITOCHONDRIAL"/>
    <property type="match status" value="1"/>
</dbReference>
<dbReference type="PANTHER" id="PTHR43740">
    <property type="entry name" value="LEUCYL-TRNA SYNTHETASE"/>
    <property type="match status" value="1"/>
</dbReference>
<dbReference type="Pfam" id="PF08264">
    <property type="entry name" value="Anticodon_1"/>
    <property type="match status" value="1"/>
</dbReference>
<dbReference type="Pfam" id="PF00133">
    <property type="entry name" value="tRNA-synt_1"/>
    <property type="match status" value="1"/>
</dbReference>
<dbReference type="Pfam" id="PF13603">
    <property type="entry name" value="tRNA-synt_1_2"/>
    <property type="match status" value="1"/>
</dbReference>
<dbReference type="Pfam" id="PF09334">
    <property type="entry name" value="tRNA-synt_1g"/>
    <property type="match status" value="1"/>
</dbReference>
<dbReference type="PRINTS" id="PR00985">
    <property type="entry name" value="TRNASYNTHLEU"/>
</dbReference>
<dbReference type="SUPFAM" id="SSF47323">
    <property type="entry name" value="Anticodon-binding domain of a subclass of class I aminoacyl-tRNA synthetases"/>
    <property type="match status" value="1"/>
</dbReference>
<dbReference type="SUPFAM" id="SSF52374">
    <property type="entry name" value="Nucleotidylyl transferase"/>
    <property type="match status" value="1"/>
</dbReference>
<dbReference type="SUPFAM" id="SSF50677">
    <property type="entry name" value="ValRS/IleRS/LeuRS editing domain"/>
    <property type="match status" value="1"/>
</dbReference>
<dbReference type="PROSITE" id="PS00178">
    <property type="entry name" value="AA_TRNA_LIGASE_I"/>
    <property type="match status" value="1"/>
</dbReference>
<protein>
    <recommendedName>
        <fullName evidence="1">Leucine--tRNA ligase</fullName>
        <ecNumber evidence="1">6.1.1.4</ecNumber>
    </recommendedName>
    <alternativeName>
        <fullName evidence="1">Leucyl-tRNA synthetase</fullName>
        <shortName evidence="1">LeuRS</shortName>
    </alternativeName>
</protein>